<feature type="chain" id="PRO_0000218433" description="Uncharacterized protein TC_0248">
    <location>
        <begin position="1"/>
        <end position="601"/>
    </location>
</feature>
<organism>
    <name type="scientific">Chlamydia muridarum (strain MoPn / Nigg)</name>
    <dbReference type="NCBI Taxonomy" id="243161"/>
    <lineage>
        <taxon>Bacteria</taxon>
        <taxon>Pseudomonadati</taxon>
        <taxon>Chlamydiota</taxon>
        <taxon>Chlamydiia</taxon>
        <taxon>Chlamydiales</taxon>
        <taxon>Chlamydiaceae</taxon>
        <taxon>Chlamydia/Chlamydophila group</taxon>
        <taxon>Chlamydia</taxon>
    </lineage>
</organism>
<name>Y248_CHLMU</name>
<dbReference type="EMBL" id="AE002160">
    <property type="protein sequence ID" value="AAF39117.1"/>
    <property type="molecule type" value="Genomic_DNA"/>
</dbReference>
<dbReference type="PIR" id="B81723">
    <property type="entry name" value="B81723"/>
</dbReference>
<dbReference type="RefSeq" id="WP_010229939.1">
    <property type="nucleotide sequence ID" value="NZ_CP063055.1"/>
</dbReference>
<dbReference type="SMR" id="Q9PL60"/>
<dbReference type="MEROPS" id="S41.011"/>
<dbReference type="GeneID" id="1246417"/>
<dbReference type="KEGG" id="cmu:TC_0248"/>
<dbReference type="eggNOG" id="COG0793">
    <property type="taxonomic scope" value="Bacteria"/>
</dbReference>
<dbReference type="HOGENOM" id="CLU_452499_0_0_0"/>
<dbReference type="OrthoDB" id="16754at2"/>
<dbReference type="Proteomes" id="UP000000800">
    <property type="component" value="Chromosome"/>
</dbReference>
<dbReference type="GO" id="GO:0030288">
    <property type="term" value="C:outer membrane-bounded periplasmic space"/>
    <property type="evidence" value="ECO:0007669"/>
    <property type="project" value="TreeGrafter"/>
</dbReference>
<dbReference type="GO" id="GO:0004175">
    <property type="term" value="F:endopeptidase activity"/>
    <property type="evidence" value="ECO:0007669"/>
    <property type="project" value="TreeGrafter"/>
</dbReference>
<dbReference type="GO" id="GO:0008236">
    <property type="term" value="F:serine-type peptidase activity"/>
    <property type="evidence" value="ECO:0007669"/>
    <property type="project" value="InterPro"/>
</dbReference>
<dbReference type="GO" id="GO:0006508">
    <property type="term" value="P:proteolysis"/>
    <property type="evidence" value="ECO:0007669"/>
    <property type="project" value="InterPro"/>
</dbReference>
<dbReference type="GO" id="GO:0007165">
    <property type="term" value="P:signal transduction"/>
    <property type="evidence" value="ECO:0007669"/>
    <property type="project" value="TreeGrafter"/>
</dbReference>
<dbReference type="CDD" id="cd07563">
    <property type="entry name" value="Peptidase_S41_IRBP"/>
    <property type="match status" value="1"/>
</dbReference>
<dbReference type="Gene3D" id="2.30.42.10">
    <property type="match status" value="1"/>
</dbReference>
<dbReference type="Gene3D" id="3.90.226.10">
    <property type="entry name" value="2-enoyl-CoA Hydratase, Chain A, domain 1"/>
    <property type="match status" value="1"/>
</dbReference>
<dbReference type="InterPro" id="IPR029045">
    <property type="entry name" value="ClpP/crotonase-like_dom_sf"/>
</dbReference>
<dbReference type="InterPro" id="IPR041126">
    <property type="entry name" value="CPAF_PDZ"/>
</dbReference>
<dbReference type="InterPro" id="IPR036034">
    <property type="entry name" value="PDZ_sf"/>
</dbReference>
<dbReference type="InterPro" id="IPR005151">
    <property type="entry name" value="Tail-specific_protease"/>
</dbReference>
<dbReference type="NCBIfam" id="NF033424">
    <property type="entry name" value="chlamy_CPAF"/>
    <property type="match status" value="1"/>
</dbReference>
<dbReference type="PANTHER" id="PTHR32060:SF30">
    <property type="entry name" value="CARBOXY-TERMINAL PROCESSING PROTEASE CTPA"/>
    <property type="match status" value="1"/>
</dbReference>
<dbReference type="PANTHER" id="PTHR32060">
    <property type="entry name" value="TAIL-SPECIFIC PROTEASE"/>
    <property type="match status" value="1"/>
</dbReference>
<dbReference type="Pfam" id="PF17816">
    <property type="entry name" value="PDZ_4"/>
    <property type="match status" value="1"/>
</dbReference>
<dbReference type="Pfam" id="PF03572">
    <property type="entry name" value="Peptidase_S41"/>
    <property type="match status" value="1"/>
</dbReference>
<dbReference type="SMART" id="SM00245">
    <property type="entry name" value="TSPc"/>
    <property type="match status" value="1"/>
</dbReference>
<dbReference type="SUPFAM" id="SSF52096">
    <property type="entry name" value="ClpP/crotonase"/>
    <property type="match status" value="1"/>
</dbReference>
<sequence length="601" mass="67113">MKMNRILLLLLTFSSAIHSPLHGESLVCQNALKDLSFLEHLLQVKYAPKTWKEQYLGWDLSKSSVFAEQKLRSEDNPSTSFCQQVIADFIGALSDFHAGVSFFAVESAYLPYSVQKSSDGRFYFVDVMTFSSDIRVGDELLEVDGQPVAEALATLYGTNHKGTLAEESAALRTLFSRMASLGHKVPSGRITLKVRRSSGSVKDVRAKWRYTPESVGDLATIAPSIKAPQLQKSMRGAFPKKESVFHQSSTLFYSPMVPHFWSEFRNHYATSGLKSGYNIGDTDGFFPVMGPVIWESDGIFHAYIFPLVDENGRSHNVGFIRIPTYGWQEMEDLDSIGTPPWEEFGKIITLFSEKTEALIIDQTNNPGGSVMYLYGLLSMLTDKPLDLPKHRMILTQDEVVDALDWLNLLENVDTNAEARIALGDNMEGYPIDLQAAEYLKSFAHQVLACWKNGDIELSTPIPLFGFEKIHPHPRVQYTKPICVLINEQDFSCADFFPAILKDNDRALVVGTRTAGAGGFVFNVQFPNRTGIKSCSLTGSLAVREHGDLIENVGVEPHIEIPFTANDIRYRGYSEYIQKVQKLVAQLINNDSVIILSEDGSF</sequence>
<protein>
    <recommendedName>
        <fullName>Uncharacterized protein TC_0248</fullName>
    </recommendedName>
</protein>
<comment type="similarity">
    <text evidence="1">Belongs to the chlamydial CPn_1016/CT_858/TC_0248 family.</text>
</comment>
<gene>
    <name type="ordered locus">TC_0248</name>
</gene>
<accession>Q9PL60</accession>
<reference key="1">
    <citation type="journal article" date="2000" name="Nucleic Acids Res.">
        <title>Genome sequences of Chlamydia trachomatis MoPn and Chlamydia pneumoniae AR39.</title>
        <authorList>
            <person name="Read T.D."/>
            <person name="Brunham R.C."/>
            <person name="Shen C."/>
            <person name="Gill S.R."/>
            <person name="Heidelberg J.F."/>
            <person name="White O."/>
            <person name="Hickey E.K."/>
            <person name="Peterson J.D."/>
            <person name="Utterback T.R."/>
            <person name="Berry K.J."/>
            <person name="Bass S."/>
            <person name="Linher K.D."/>
            <person name="Weidman J.F."/>
            <person name="Khouri H.M."/>
            <person name="Craven B."/>
            <person name="Bowman C."/>
            <person name="Dodson R.J."/>
            <person name="Gwinn M.L."/>
            <person name="Nelson W.C."/>
            <person name="DeBoy R.T."/>
            <person name="Kolonay J.F."/>
            <person name="McClarty G."/>
            <person name="Salzberg S.L."/>
            <person name="Eisen J.A."/>
            <person name="Fraser C.M."/>
        </authorList>
    </citation>
    <scope>NUCLEOTIDE SEQUENCE [LARGE SCALE GENOMIC DNA]</scope>
    <source>
        <strain>MoPn / Nigg</strain>
    </source>
</reference>
<evidence type="ECO:0000305" key="1"/>
<proteinExistence type="inferred from homology"/>